<accession>P01670</accession>
<feature type="chain" id="PRO_0000059792" description="Ig kappa chain V-III region PC 6684">
    <location>
        <begin position="1"/>
        <end position="111" status="greater than"/>
    </location>
</feature>
<feature type="region of interest" description="Framework-1">
    <location>
        <begin position="1"/>
        <end position="23"/>
    </location>
</feature>
<feature type="region of interest" description="Complementarity-determining-1">
    <location>
        <begin position="24"/>
        <end position="38"/>
    </location>
</feature>
<feature type="region of interest" description="Framework-2">
    <location>
        <begin position="39"/>
        <end position="53"/>
    </location>
</feature>
<feature type="region of interest" description="Complementarity-determining-2">
    <location>
        <begin position="54"/>
        <end position="60"/>
    </location>
</feature>
<feature type="region of interest" description="Framework-3">
    <location>
        <begin position="61"/>
        <end position="92"/>
    </location>
</feature>
<feature type="region of interest" description="Complementarity-determining-3">
    <location>
        <begin position="93"/>
        <end position="101"/>
    </location>
</feature>
<feature type="region of interest" description="Framework-4">
    <location>
        <begin position="102"/>
        <end position="111"/>
    </location>
</feature>
<feature type="disulfide bond" evidence="1">
    <location>
        <begin position="23"/>
        <end position="92"/>
    </location>
</feature>
<feature type="non-terminal residue">
    <location>
        <position position="111"/>
    </location>
</feature>
<name>KV3AI_MOUSE</name>
<reference key="1">
    <citation type="journal article" date="1978" name="Nature">
        <title>Rearrangement of genetic information may produce immunoglobulin diversity.</title>
        <authorList>
            <person name="Weigert M."/>
            <person name="Gatmaitan L."/>
            <person name="Loh E."/>
            <person name="Schilling J."/>
            <person name="Hood L.E."/>
        </authorList>
    </citation>
    <scope>PROTEIN SEQUENCE</scope>
</reference>
<protein>
    <recommendedName>
        <fullName>Ig kappa chain V-III region PC 6684</fullName>
    </recommendedName>
</protein>
<evidence type="ECO:0000255" key="1">
    <source>
        <dbReference type="PROSITE-ProRule" id="PRU00114"/>
    </source>
</evidence>
<dbReference type="PIR" id="A01938">
    <property type="entry name" value="KVMS84"/>
</dbReference>
<dbReference type="SMR" id="P01670"/>
<dbReference type="FunCoup" id="P01670">
    <property type="interactions" value="772"/>
</dbReference>
<dbReference type="jPOST" id="P01670"/>
<dbReference type="InParanoid" id="P01670"/>
<dbReference type="Proteomes" id="UP000000589">
    <property type="component" value="Unplaced"/>
</dbReference>
<dbReference type="RNAct" id="P01670">
    <property type="molecule type" value="protein"/>
</dbReference>
<dbReference type="GO" id="GO:0019814">
    <property type="term" value="C:immunoglobulin complex"/>
    <property type="evidence" value="ECO:0000318"/>
    <property type="project" value="GO_Central"/>
</dbReference>
<dbReference type="GO" id="GO:0002250">
    <property type="term" value="P:adaptive immune response"/>
    <property type="evidence" value="ECO:0007669"/>
    <property type="project" value="UniProtKB-KW"/>
</dbReference>
<dbReference type="GO" id="GO:0006955">
    <property type="term" value="P:immune response"/>
    <property type="evidence" value="ECO:0000318"/>
    <property type="project" value="GO_Central"/>
</dbReference>
<dbReference type="CDD" id="cd04980">
    <property type="entry name" value="IgV_L_kappa"/>
    <property type="match status" value="1"/>
</dbReference>
<dbReference type="FunFam" id="2.60.40.10:FF:000350">
    <property type="entry name" value="Immunoglobulin kappa chain variable 18-36"/>
    <property type="match status" value="1"/>
</dbReference>
<dbReference type="Gene3D" id="2.60.40.10">
    <property type="entry name" value="Immunoglobulins"/>
    <property type="match status" value="1"/>
</dbReference>
<dbReference type="InterPro" id="IPR007110">
    <property type="entry name" value="Ig-like_dom"/>
</dbReference>
<dbReference type="InterPro" id="IPR036179">
    <property type="entry name" value="Ig-like_dom_sf"/>
</dbReference>
<dbReference type="InterPro" id="IPR013783">
    <property type="entry name" value="Ig-like_fold"/>
</dbReference>
<dbReference type="InterPro" id="IPR003599">
    <property type="entry name" value="Ig_sub"/>
</dbReference>
<dbReference type="InterPro" id="IPR013106">
    <property type="entry name" value="Ig_V-set"/>
</dbReference>
<dbReference type="InterPro" id="IPR050150">
    <property type="entry name" value="IgV_Light_Chain"/>
</dbReference>
<dbReference type="PANTHER" id="PTHR23267">
    <property type="entry name" value="IMMUNOGLOBULIN LIGHT CHAIN"/>
    <property type="match status" value="1"/>
</dbReference>
<dbReference type="Pfam" id="PF07686">
    <property type="entry name" value="V-set"/>
    <property type="match status" value="1"/>
</dbReference>
<dbReference type="SMART" id="SM00409">
    <property type="entry name" value="IG"/>
    <property type="match status" value="1"/>
</dbReference>
<dbReference type="SMART" id="SM00406">
    <property type="entry name" value="IGv"/>
    <property type="match status" value="1"/>
</dbReference>
<dbReference type="SUPFAM" id="SSF48726">
    <property type="entry name" value="Immunoglobulin"/>
    <property type="match status" value="1"/>
</dbReference>
<dbReference type="PROSITE" id="PS50835">
    <property type="entry name" value="IG_LIKE"/>
    <property type="match status" value="1"/>
</dbReference>
<proteinExistence type="evidence at protein level"/>
<keyword id="KW-1064">Adaptive immunity</keyword>
<keyword id="KW-0903">Direct protein sequencing</keyword>
<keyword id="KW-1015">Disulfide bond</keyword>
<keyword id="KW-0391">Immunity</keyword>
<keyword id="KW-1280">Immunoglobulin</keyword>
<keyword id="KW-1185">Reference proteome</keyword>
<sequence length="111" mass="12040">DIVLTQSPASLAVSLGQRATISCRASKSVSTSGYSYMHWYQQKPGQPPKLLIYLASNLESGVPARFSGSGSGTDFTLNIHPVEEEDAATYYCQHSRELPRTFGGGTKLEIK</sequence>
<organism>
    <name type="scientific">Mus musculus</name>
    <name type="common">Mouse</name>
    <dbReference type="NCBI Taxonomy" id="10090"/>
    <lineage>
        <taxon>Eukaryota</taxon>
        <taxon>Metazoa</taxon>
        <taxon>Chordata</taxon>
        <taxon>Craniata</taxon>
        <taxon>Vertebrata</taxon>
        <taxon>Euteleostomi</taxon>
        <taxon>Mammalia</taxon>
        <taxon>Eutheria</taxon>
        <taxon>Euarchontoglires</taxon>
        <taxon>Glires</taxon>
        <taxon>Rodentia</taxon>
        <taxon>Myomorpha</taxon>
        <taxon>Muroidea</taxon>
        <taxon>Muridae</taxon>
        <taxon>Murinae</taxon>
        <taxon>Mus</taxon>
        <taxon>Mus</taxon>
    </lineage>
</organism>